<evidence type="ECO:0000250" key="1"/>
<evidence type="ECO:0000255" key="2">
    <source>
        <dbReference type="PROSITE-ProRule" id="PRU01059"/>
    </source>
</evidence>
<gene>
    <name type="ordered locus">MT0128</name>
</gene>
<comment type="similarity">
    <text evidence="2">Belongs to the TRAFAC class translation factor GTPase superfamily. Classic translation factor GTPase family. EF-G/EF-2 subfamily.</text>
</comment>
<reference key="1">
    <citation type="journal article" date="2002" name="J. Bacteriol.">
        <title>Whole-genome comparison of Mycobacterium tuberculosis clinical and laboratory strains.</title>
        <authorList>
            <person name="Fleischmann R.D."/>
            <person name="Alland D."/>
            <person name="Eisen J.A."/>
            <person name="Carpenter L."/>
            <person name="White O."/>
            <person name="Peterson J.D."/>
            <person name="DeBoy R.T."/>
            <person name="Dodson R.J."/>
            <person name="Gwinn M.L."/>
            <person name="Haft D.H."/>
            <person name="Hickey E.K."/>
            <person name="Kolonay J.F."/>
            <person name="Nelson W.C."/>
            <person name="Umayam L.A."/>
            <person name="Ermolaeva M.D."/>
            <person name="Salzberg S.L."/>
            <person name="Delcher A."/>
            <person name="Utterback T.R."/>
            <person name="Weidman J.F."/>
            <person name="Khouri H.M."/>
            <person name="Gill J."/>
            <person name="Mikula A."/>
            <person name="Bishai W."/>
            <person name="Jacobs W.R. Jr."/>
            <person name="Venter J.C."/>
            <person name="Fraser C.M."/>
        </authorList>
    </citation>
    <scope>NUCLEOTIDE SEQUENCE [LARGE SCALE GENOMIC DNA]</scope>
    <source>
        <strain>CDC 1551 / Oshkosh</strain>
    </source>
</reference>
<sequence length="714" mass="75603">MADRVNASQGAAAAPTANGPGGVRNVVLVGPSGGGKTTLIEALLVAAKVLSRPGSVTEGTTVCDFDEAEIRQQRSVGLAVASLAYDGIKVNLVDTPGYADFVGELRAGLRAADCALFVIAANEGVDEPTKSLWQECSQVGMPRAVVITKLDHARANYREALTAAQDAFGDKVLPLYLPSGDGLIGLLSQALYEYADGKRTTRTPAESDTERIEEARGALIEGIIEESEDESLMERYLGGETIDESVLIQDLEKAVARGSFFPVIPVCSSTGVGTLELLEVATRGFPSPMEHPLPEVFTPQGVPHAELACDNDAPLLAEVVKTTSDPYVGRVSLVRVFSGTIRPDTTVHVSGHFSSFFGGGTSNTHPDHDEDERIGVLSFPLGKQQRPAAAVVAGDICAIGKLSRAETGDTLSDKAEPLVLKPWTMPEPLLPIAIAAHAKTDEDKLSVGLGRLAAEDPTLRIEQNQETHQVVLWCMGEAHAGVVLDTLANRYGVSVDTIELRVPLRETFAGNAKGHGRHIKQSGGHGQYGVCDIEVEPLPEGSGFEFLDKVVGGAVPRQFIPSVEKGVRAQMDKGVHAGYPVVDIRVTLLDGKAHSVDSSDFAFQMAGALALREAAAATKVILLEPIDEISVLVPDDFVGAVLGDLSSRRGRVLGTETAGHDRTVIKAEVPQVELTRYAIDLRSLAHGAASFTRSFARYEPMPESAAARVKAGAG</sequence>
<accession>P9WNM8</accession>
<accession>L0T2N7</accession>
<accession>O07170</accession>
<proteinExistence type="inferred from homology"/>
<organism>
    <name type="scientific">Mycobacterium tuberculosis (strain CDC 1551 / Oshkosh)</name>
    <dbReference type="NCBI Taxonomy" id="83331"/>
    <lineage>
        <taxon>Bacteria</taxon>
        <taxon>Bacillati</taxon>
        <taxon>Actinomycetota</taxon>
        <taxon>Actinomycetes</taxon>
        <taxon>Mycobacteriales</taxon>
        <taxon>Mycobacteriaceae</taxon>
        <taxon>Mycobacterium</taxon>
        <taxon>Mycobacterium tuberculosis complex</taxon>
    </lineage>
</organism>
<protein>
    <recommendedName>
        <fullName>Elongation factor G-like protein</fullName>
    </recommendedName>
</protein>
<name>EFGL_MYCTO</name>
<dbReference type="EMBL" id="AE000516">
    <property type="protein sequence ID" value="AAK44352.1"/>
    <property type="molecule type" value="Genomic_DNA"/>
</dbReference>
<dbReference type="PIR" id="A70983">
    <property type="entry name" value="A70983"/>
</dbReference>
<dbReference type="RefSeq" id="WP_003400860.1">
    <property type="nucleotide sequence ID" value="NZ_KK341227.1"/>
</dbReference>
<dbReference type="SMR" id="P9WNM8"/>
<dbReference type="KEGG" id="mtc:MT0128"/>
<dbReference type="PATRIC" id="fig|83331.31.peg.137"/>
<dbReference type="HOGENOM" id="CLU_002794_4_2_11"/>
<dbReference type="Proteomes" id="UP000001020">
    <property type="component" value="Chromosome"/>
</dbReference>
<dbReference type="GO" id="GO:0005525">
    <property type="term" value="F:GTP binding"/>
    <property type="evidence" value="ECO:0007669"/>
    <property type="project" value="UniProtKB-KW"/>
</dbReference>
<dbReference type="GO" id="GO:0003924">
    <property type="term" value="F:GTPase activity"/>
    <property type="evidence" value="ECO:0007669"/>
    <property type="project" value="InterPro"/>
</dbReference>
<dbReference type="GO" id="GO:0003746">
    <property type="term" value="F:translation elongation factor activity"/>
    <property type="evidence" value="ECO:0007669"/>
    <property type="project" value="InterPro"/>
</dbReference>
<dbReference type="GO" id="GO:0032790">
    <property type="term" value="P:ribosome disassembly"/>
    <property type="evidence" value="ECO:0007669"/>
    <property type="project" value="TreeGrafter"/>
</dbReference>
<dbReference type="CDD" id="cd16262">
    <property type="entry name" value="EFG_III"/>
    <property type="match status" value="1"/>
</dbReference>
<dbReference type="CDD" id="cd01434">
    <property type="entry name" value="EFG_mtEFG1_IV"/>
    <property type="match status" value="1"/>
</dbReference>
<dbReference type="CDD" id="cd03713">
    <property type="entry name" value="EFG_mtEFG_C"/>
    <property type="match status" value="1"/>
</dbReference>
<dbReference type="FunFam" id="3.30.230.10:FF:000003">
    <property type="entry name" value="Elongation factor G"/>
    <property type="match status" value="1"/>
</dbReference>
<dbReference type="FunFam" id="3.30.70.240:FF:000012">
    <property type="entry name" value="Elongation factor G"/>
    <property type="match status" value="1"/>
</dbReference>
<dbReference type="FunFam" id="2.40.30.10:FF:000151">
    <property type="entry name" value="Translation elongation factor EF-G"/>
    <property type="match status" value="1"/>
</dbReference>
<dbReference type="Gene3D" id="3.30.230.10">
    <property type="match status" value="1"/>
</dbReference>
<dbReference type="Gene3D" id="3.30.70.240">
    <property type="match status" value="1"/>
</dbReference>
<dbReference type="Gene3D" id="3.30.70.870">
    <property type="entry name" value="Elongation Factor G (Translational Gtpase), domain 3"/>
    <property type="match status" value="1"/>
</dbReference>
<dbReference type="Gene3D" id="3.40.50.300">
    <property type="entry name" value="P-loop containing nucleotide triphosphate hydrolases"/>
    <property type="match status" value="1"/>
</dbReference>
<dbReference type="Gene3D" id="2.40.30.10">
    <property type="entry name" value="Translation factors"/>
    <property type="match status" value="1"/>
</dbReference>
<dbReference type="InterPro" id="IPR041095">
    <property type="entry name" value="EFG_II"/>
</dbReference>
<dbReference type="InterPro" id="IPR009022">
    <property type="entry name" value="EFG_III"/>
</dbReference>
<dbReference type="InterPro" id="IPR035647">
    <property type="entry name" value="EFG_III/V"/>
</dbReference>
<dbReference type="InterPro" id="IPR047872">
    <property type="entry name" value="EFG_IV"/>
</dbReference>
<dbReference type="InterPro" id="IPR035649">
    <property type="entry name" value="EFG_V"/>
</dbReference>
<dbReference type="InterPro" id="IPR000640">
    <property type="entry name" value="EFG_V-like"/>
</dbReference>
<dbReference type="InterPro" id="IPR004161">
    <property type="entry name" value="EFTu-like_2"/>
</dbReference>
<dbReference type="InterPro" id="IPR027417">
    <property type="entry name" value="P-loop_NTPase"/>
</dbReference>
<dbReference type="InterPro" id="IPR020568">
    <property type="entry name" value="Ribosomal_Su5_D2-typ_SF"/>
</dbReference>
<dbReference type="InterPro" id="IPR014721">
    <property type="entry name" value="Ribsml_uS5_D2-typ_fold_subgr"/>
</dbReference>
<dbReference type="InterPro" id="IPR005225">
    <property type="entry name" value="Small_GTP-bd"/>
</dbReference>
<dbReference type="InterPro" id="IPR000795">
    <property type="entry name" value="T_Tr_GTP-bd_dom"/>
</dbReference>
<dbReference type="InterPro" id="IPR009000">
    <property type="entry name" value="Transl_B-barrel_sf"/>
</dbReference>
<dbReference type="InterPro" id="IPR005517">
    <property type="entry name" value="Transl_elong_EFG/EF2_IV"/>
</dbReference>
<dbReference type="NCBIfam" id="NF009377">
    <property type="entry name" value="PRK12740.1-1"/>
    <property type="match status" value="1"/>
</dbReference>
<dbReference type="NCBIfam" id="NF009381">
    <property type="entry name" value="PRK12740.1-5"/>
    <property type="match status" value="1"/>
</dbReference>
<dbReference type="NCBIfam" id="TIGR00231">
    <property type="entry name" value="small_GTP"/>
    <property type="match status" value="1"/>
</dbReference>
<dbReference type="PANTHER" id="PTHR43261:SF6">
    <property type="entry name" value="ELONGATION FACTOR G-LIKE PROTEIN"/>
    <property type="match status" value="1"/>
</dbReference>
<dbReference type="PANTHER" id="PTHR43261">
    <property type="entry name" value="TRANSLATION ELONGATION FACTOR G-RELATED"/>
    <property type="match status" value="1"/>
</dbReference>
<dbReference type="Pfam" id="PF00679">
    <property type="entry name" value="EFG_C"/>
    <property type="match status" value="1"/>
</dbReference>
<dbReference type="Pfam" id="PF14492">
    <property type="entry name" value="EFG_III"/>
    <property type="match status" value="1"/>
</dbReference>
<dbReference type="Pfam" id="PF03764">
    <property type="entry name" value="EFG_IV"/>
    <property type="match status" value="1"/>
</dbReference>
<dbReference type="Pfam" id="PF00009">
    <property type="entry name" value="GTP_EFTU"/>
    <property type="match status" value="1"/>
</dbReference>
<dbReference type="Pfam" id="PF03144">
    <property type="entry name" value="GTP_EFTU_D2"/>
    <property type="match status" value="1"/>
</dbReference>
<dbReference type="SMART" id="SM00838">
    <property type="entry name" value="EFG_C"/>
    <property type="match status" value="1"/>
</dbReference>
<dbReference type="SMART" id="SM00889">
    <property type="entry name" value="EFG_IV"/>
    <property type="match status" value="1"/>
</dbReference>
<dbReference type="SUPFAM" id="SSF54980">
    <property type="entry name" value="EF-G C-terminal domain-like"/>
    <property type="match status" value="2"/>
</dbReference>
<dbReference type="SUPFAM" id="SSF52540">
    <property type="entry name" value="P-loop containing nucleoside triphosphate hydrolases"/>
    <property type="match status" value="1"/>
</dbReference>
<dbReference type="SUPFAM" id="SSF54211">
    <property type="entry name" value="Ribosomal protein S5 domain 2-like"/>
    <property type="match status" value="1"/>
</dbReference>
<dbReference type="SUPFAM" id="SSF50447">
    <property type="entry name" value="Translation proteins"/>
    <property type="match status" value="1"/>
</dbReference>
<dbReference type="PROSITE" id="PS51722">
    <property type="entry name" value="G_TR_2"/>
    <property type="match status" value="1"/>
</dbReference>
<keyword id="KW-0342">GTP-binding</keyword>
<keyword id="KW-0547">Nucleotide-binding</keyword>
<keyword id="KW-1185">Reference proteome</keyword>
<feature type="chain" id="PRO_0000427099" description="Elongation factor G-like protein">
    <location>
        <begin position="1"/>
        <end position="714"/>
    </location>
</feature>
<feature type="domain" description="tr-type G" evidence="2">
    <location>
        <begin position="21"/>
        <end position="289"/>
    </location>
</feature>
<feature type="region of interest" description="G1" evidence="2">
    <location>
        <begin position="30"/>
        <end position="37"/>
    </location>
</feature>
<feature type="region of interest" description="G2" evidence="2">
    <location>
        <begin position="73"/>
        <end position="77"/>
    </location>
</feature>
<feature type="region of interest" description="G3" evidence="2">
    <location>
        <begin position="94"/>
        <end position="97"/>
    </location>
</feature>
<feature type="region of interest" description="G4" evidence="2">
    <location>
        <begin position="148"/>
        <end position="151"/>
    </location>
</feature>
<feature type="region of interest" description="G5" evidence="2">
    <location>
        <begin position="267"/>
        <end position="269"/>
    </location>
</feature>
<feature type="binding site" evidence="1">
    <location>
        <begin position="30"/>
        <end position="37"/>
    </location>
    <ligand>
        <name>GTP</name>
        <dbReference type="ChEBI" id="CHEBI:37565"/>
    </ligand>
</feature>
<feature type="binding site" evidence="1">
    <location>
        <begin position="94"/>
        <end position="98"/>
    </location>
    <ligand>
        <name>GTP</name>
        <dbReference type="ChEBI" id="CHEBI:37565"/>
    </ligand>
</feature>
<feature type="binding site" evidence="1">
    <location>
        <begin position="148"/>
        <end position="151"/>
    </location>
    <ligand>
        <name>GTP</name>
        <dbReference type="ChEBI" id="CHEBI:37565"/>
    </ligand>
</feature>